<name>DNAA_LEPCP</name>
<evidence type="ECO:0000255" key="1">
    <source>
        <dbReference type="HAMAP-Rule" id="MF_00377"/>
    </source>
</evidence>
<evidence type="ECO:0000256" key="2">
    <source>
        <dbReference type="SAM" id="MobiDB-lite"/>
    </source>
</evidence>
<gene>
    <name evidence="1" type="primary">dnaA</name>
    <name type="ordered locus">Lcho_0001</name>
</gene>
<proteinExistence type="inferred from homology"/>
<feature type="chain" id="PRO_1000121996" description="Chromosomal replication initiator protein DnaA">
    <location>
        <begin position="1"/>
        <end position="510"/>
    </location>
</feature>
<feature type="region of interest" description="Domain I, interacts with DnaA modulators" evidence="1">
    <location>
        <begin position="1"/>
        <end position="74"/>
    </location>
</feature>
<feature type="region of interest" description="Domain II" evidence="1">
    <location>
        <begin position="74"/>
        <end position="173"/>
    </location>
</feature>
<feature type="region of interest" description="Disordered" evidence="2">
    <location>
        <begin position="125"/>
        <end position="168"/>
    </location>
</feature>
<feature type="region of interest" description="Domain III, AAA+ region" evidence="1">
    <location>
        <begin position="174"/>
        <end position="390"/>
    </location>
</feature>
<feature type="region of interest" description="Domain IV, binds dsDNA" evidence="1">
    <location>
        <begin position="391"/>
        <end position="510"/>
    </location>
</feature>
<feature type="binding site" evidence="1">
    <location>
        <position position="218"/>
    </location>
    <ligand>
        <name>ATP</name>
        <dbReference type="ChEBI" id="CHEBI:30616"/>
    </ligand>
</feature>
<feature type="binding site" evidence="1">
    <location>
        <position position="220"/>
    </location>
    <ligand>
        <name>ATP</name>
        <dbReference type="ChEBI" id="CHEBI:30616"/>
    </ligand>
</feature>
<feature type="binding site" evidence="1">
    <location>
        <position position="221"/>
    </location>
    <ligand>
        <name>ATP</name>
        <dbReference type="ChEBI" id="CHEBI:30616"/>
    </ligand>
</feature>
<feature type="binding site" evidence="1">
    <location>
        <position position="222"/>
    </location>
    <ligand>
        <name>ATP</name>
        <dbReference type="ChEBI" id="CHEBI:30616"/>
    </ligand>
</feature>
<organism>
    <name type="scientific">Leptothrix cholodnii (strain ATCC 51168 / LMG 8142 / SP-6)</name>
    <name type="common">Leptothrix discophora (strain SP-6)</name>
    <dbReference type="NCBI Taxonomy" id="395495"/>
    <lineage>
        <taxon>Bacteria</taxon>
        <taxon>Pseudomonadati</taxon>
        <taxon>Pseudomonadota</taxon>
        <taxon>Betaproteobacteria</taxon>
        <taxon>Burkholderiales</taxon>
        <taxon>Sphaerotilaceae</taxon>
        <taxon>Leptothrix</taxon>
    </lineage>
</organism>
<reference key="1">
    <citation type="submission" date="2008-03" db="EMBL/GenBank/DDBJ databases">
        <title>Complete sequence of Leptothrix cholodnii SP-6.</title>
        <authorList>
            <consortium name="US DOE Joint Genome Institute"/>
            <person name="Copeland A."/>
            <person name="Lucas S."/>
            <person name="Lapidus A."/>
            <person name="Glavina del Rio T."/>
            <person name="Dalin E."/>
            <person name="Tice H."/>
            <person name="Bruce D."/>
            <person name="Goodwin L."/>
            <person name="Pitluck S."/>
            <person name="Chertkov O."/>
            <person name="Brettin T."/>
            <person name="Detter J.C."/>
            <person name="Han C."/>
            <person name="Kuske C.R."/>
            <person name="Schmutz J."/>
            <person name="Larimer F."/>
            <person name="Land M."/>
            <person name="Hauser L."/>
            <person name="Kyrpides N."/>
            <person name="Lykidis A."/>
            <person name="Emerson D."/>
            <person name="Richardson P."/>
        </authorList>
    </citation>
    <scope>NUCLEOTIDE SEQUENCE [LARGE SCALE GENOMIC DNA]</scope>
    <source>
        <strain>ATCC 51168 / LMG 8142 / SP-6</strain>
    </source>
</reference>
<sequence>MHTDLWERGCERLAAELPEQQFNTWIRPLPPADVTLAGDGVLVGLRVPNRFKLDWIRAQYGSRIEATLSELAGKPVRLELSLLPRDAVARAQGMAAAPAAQAGAAPQPTQSPMAIGAALHAAATARHDPQSVVPTPGGSANGRAAPRVGEPGGPVGTSTLPVAPTLSPAVSRGRLNPALTFDTLVPGRANQMARTAALHVVGAPGHMYNPLFIYGGVGLGKTHLIHAVGNALIRDNPDARVLYLHAEQFISDVVRNYQRKTFDELKAKYHSLDLLLIDDVQFFAGKDRTQEEFFNAFEALLAKRAHIIMTSDTYPKGLVDIDERLTSRFDAGLTVAIEPPELEMRVAILMKKSDAEGSRMPEDVAFFVAKNVRANVRELEGALRKVLAYSRFSHKEISINLAREALKDLLSIQNRQVSVENIQKTVADFYKIKIADMYSKKRPASIARPRQIAMYLAKEMTQKSLPEIGELFGGRDHTTVLHAVRKIGGERQKNTELNQQLHVLEQTLKG</sequence>
<protein>
    <recommendedName>
        <fullName evidence="1">Chromosomal replication initiator protein DnaA</fullName>
    </recommendedName>
</protein>
<dbReference type="EMBL" id="CP001013">
    <property type="protein sequence ID" value="ACB32277.1"/>
    <property type="molecule type" value="Genomic_DNA"/>
</dbReference>
<dbReference type="RefSeq" id="WP_012345039.1">
    <property type="nucleotide sequence ID" value="NC_010524.1"/>
</dbReference>
<dbReference type="SMR" id="B1Y547"/>
<dbReference type="STRING" id="395495.Lcho_0001"/>
<dbReference type="KEGG" id="lch:Lcho_0001"/>
<dbReference type="eggNOG" id="COG0593">
    <property type="taxonomic scope" value="Bacteria"/>
</dbReference>
<dbReference type="HOGENOM" id="CLU_026910_0_1_4"/>
<dbReference type="OrthoDB" id="9807019at2"/>
<dbReference type="Proteomes" id="UP000001693">
    <property type="component" value="Chromosome"/>
</dbReference>
<dbReference type="GO" id="GO:0005737">
    <property type="term" value="C:cytoplasm"/>
    <property type="evidence" value="ECO:0007669"/>
    <property type="project" value="UniProtKB-SubCell"/>
</dbReference>
<dbReference type="GO" id="GO:0005886">
    <property type="term" value="C:plasma membrane"/>
    <property type="evidence" value="ECO:0007669"/>
    <property type="project" value="TreeGrafter"/>
</dbReference>
<dbReference type="GO" id="GO:0005524">
    <property type="term" value="F:ATP binding"/>
    <property type="evidence" value="ECO:0007669"/>
    <property type="project" value="UniProtKB-UniRule"/>
</dbReference>
<dbReference type="GO" id="GO:0016887">
    <property type="term" value="F:ATP hydrolysis activity"/>
    <property type="evidence" value="ECO:0007669"/>
    <property type="project" value="InterPro"/>
</dbReference>
<dbReference type="GO" id="GO:0003688">
    <property type="term" value="F:DNA replication origin binding"/>
    <property type="evidence" value="ECO:0007669"/>
    <property type="project" value="UniProtKB-UniRule"/>
</dbReference>
<dbReference type="GO" id="GO:0008289">
    <property type="term" value="F:lipid binding"/>
    <property type="evidence" value="ECO:0007669"/>
    <property type="project" value="UniProtKB-KW"/>
</dbReference>
<dbReference type="GO" id="GO:0006270">
    <property type="term" value="P:DNA replication initiation"/>
    <property type="evidence" value="ECO:0007669"/>
    <property type="project" value="UniProtKB-UniRule"/>
</dbReference>
<dbReference type="GO" id="GO:0006275">
    <property type="term" value="P:regulation of DNA replication"/>
    <property type="evidence" value="ECO:0007669"/>
    <property type="project" value="UniProtKB-UniRule"/>
</dbReference>
<dbReference type="CDD" id="cd00009">
    <property type="entry name" value="AAA"/>
    <property type="match status" value="1"/>
</dbReference>
<dbReference type="CDD" id="cd06571">
    <property type="entry name" value="Bac_DnaA_C"/>
    <property type="match status" value="1"/>
</dbReference>
<dbReference type="FunFam" id="1.10.8.60:FF:000003">
    <property type="entry name" value="Chromosomal replication initiator protein DnaA"/>
    <property type="match status" value="1"/>
</dbReference>
<dbReference type="FunFam" id="3.40.50.300:FF:000668">
    <property type="entry name" value="Chromosomal replication initiator protein DnaA"/>
    <property type="match status" value="1"/>
</dbReference>
<dbReference type="Gene3D" id="1.10.1750.10">
    <property type="match status" value="1"/>
</dbReference>
<dbReference type="Gene3D" id="1.10.8.60">
    <property type="match status" value="1"/>
</dbReference>
<dbReference type="Gene3D" id="3.30.300.180">
    <property type="match status" value="1"/>
</dbReference>
<dbReference type="Gene3D" id="3.40.50.300">
    <property type="entry name" value="P-loop containing nucleotide triphosphate hydrolases"/>
    <property type="match status" value="1"/>
</dbReference>
<dbReference type="HAMAP" id="MF_00377">
    <property type="entry name" value="DnaA_bact"/>
    <property type="match status" value="1"/>
</dbReference>
<dbReference type="InterPro" id="IPR003593">
    <property type="entry name" value="AAA+_ATPase"/>
</dbReference>
<dbReference type="InterPro" id="IPR001957">
    <property type="entry name" value="Chromosome_initiator_DnaA"/>
</dbReference>
<dbReference type="InterPro" id="IPR020591">
    <property type="entry name" value="Chromosome_initiator_DnaA-like"/>
</dbReference>
<dbReference type="InterPro" id="IPR018312">
    <property type="entry name" value="Chromosome_initiator_DnaA_CS"/>
</dbReference>
<dbReference type="InterPro" id="IPR013159">
    <property type="entry name" value="DnaA_C"/>
</dbReference>
<dbReference type="InterPro" id="IPR013317">
    <property type="entry name" value="DnaA_dom"/>
</dbReference>
<dbReference type="InterPro" id="IPR024633">
    <property type="entry name" value="DnaA_N_dom"/>
</dbReference>
<dbReference type="InterPro" id="IPR038454">
    <property type="entry name" value="DnaA_N_sf"/>
</dbReference>
<dbReference type="InterPro" id="IPR027417">
    <property type="entry name" value="P-loop_NTPase"/>
</dbReference>
<dbReference type="InterPro" id="IPR010921">
    <property type="entry name" value="Trp_repressor/repl_initiator"/>
</dbReference>
<dbReference type="NCBIfam" id="TIGR00362">
    <property type="entry name" value="DnaA"/>
    <property type="match status" value="1"/>
</dbReference>
<dbReference type="PANTHER" id="PTHR30050">
    <property type="entry name" value="CHROMOSOMAL REPLICATION INITIATOR PROTEIN DNAA"/>
    <property type="match status" value="1"/>
</dbReference>
<dbReference type="PANTHER" id="PTHR30050:SF2">
    <property type="entry name" value="CHROMOSOMAL REPLICATION INITIATOR PROTEIN DNAA"/>
    <property type="match status" value="1"/>
</dbReference>
<dbReference type="Pfam" id="PF00308">
    <property type="entry name" value="Bac_DnaA"/>
    <property type="match status" value="1"/>
</dbReference>
<dbReference type="Pfam" id="PF08299">
    <property type="entry name" value="Bac_DnaA_C"/>
    <property type="match status" value="1"/>
</dbReference>
<dbReference type="Pfam" id="PF11638">
    <property type="entry name" value="DnaA_N"/>
    <property type="match status" value="1"/>
</dbReference>
<dbReference type="PRINTS" id="PR00051">
    <property type="entry name" value="DNAA"/>
</dbReference>
<dbReference type="SMART" id="SM00382">
    <property type="entry name" value="AAA"/>
    <property type="match status" value="1"/>
</dbReference>
<dbReference type="SMART" id="SM00760">
    <property type="entry name" value="Bac_DnaA_C"/>
    <property type="match status" value="1"/>
</dbReference>
<dbReference type="SUPFAM" id="SSF52540">
    <property type="entry name" value="P-loop containing nucleoside triphosphate hydrolases"/>
    <property type="match status" value="1"/>
</dbReference>
<dbReference type="SUPFAM" id="SSF48295">
    <property type="entry name" value="TrpR-like"/>
    <property type="match status" value="1"/>
</dbReference>
<dbReference type="PROSITE" id="PS01008">
    <property type="entry name" value="DNAA"/>
    <property type="match status" value="1"/>
</dbReference>
<accession>B1Y547</accession>
<keyword id="KW-0067">ATP-binding</keyword>
<keyword id="KW-0963">Cytoplasm</keyword>
<keyword id="KW-0235">DNA replication</keyword>
<keyword id="KW-0238">DNA-binding</keyword>
<keyword id="KW-0446">Lipid-binding</keyword>
<keyword id="KW-0547">Nucleotide-binding</keyword>
<keyword id="KW-1185">Reference proteome</keyword>
<comment type="function">
    <text evidence="1">Plays an essential role in the initiation and regulation of chromosomal replication. ATP-DnaA binds to the origin of replication (oriC) to initiate formation of the DNA replication initiation complex once per cell cycle. Binds the DnaA box (a 9 base pair repeat at the origin) and separates the double-stranded (ds)DNA. Forms a right-handed helical filament on oriC DNA; dsDNA binds to the exterior of the filament while single-stranded (ss)DNA is stabiized in the filament's interior. The ATP-DnaA-oriC complex binds and stabilizes one strand of the AT-rich DNA unwinding element (DUE), permitting loading of DNA polymerase. After initiation quickly degrades to an ADP-DnaA complex that is not apt for DNA replication. Binds acidic phospholipids.</text>
</comment>
<comment type="subunit">
    <text evidence="1">Oligomerizes as a right-handed, spiral filament on DNA at oriC.</text>
</comment>
<comment type="subcellular location">
    <subcellularLocation>
        <location evidence="1">Cytoplasm</location>
    </subcellularLocation>
</comment>
<comment type="domain">
    <text evidence="1">Domain I is involved in oligomerization and binding regulators, domain II is flexibile and of varying length in different bacteria, domain III forms the AAA+ region, while domain IV binds dsDNA.</text>
</comment>
<comment type="similarity">
    <text evidence="1">Belongs to the DnaA family.</text>
</comment>